<reference key="1">
    <citation type="submission" date="2006-10" db="EMBL/GenBank/DDBJ databases">
        <title>Complete sequence of Methanosaeta thermophila PT.</title>
        <authorList>
            <consortium name="US DOE Joint Genome Institute"/>
            <person name="Copeland A."/>
            <person name="Lucas S."/>
            <person name="Lapidus A."/>
            <person name="Barry K."/>
            <person name="Detter J.C."/>
            <person name="Glavina del Rio T."/>
            <person name="Hammon N."/>
            <person name="Israni S."/>
            <person name="Pitluck S."/>
            <person name="Chain P."/>
            <person name="Malfatti S."/>
            <person name="Shin M."/>
            <person name="Vergez L."/>
            <person name="Schmutz J."/>
            <person name="Larimer F."/>
            <person name="Land M."/>
            <person name="Hauser L."/>
            <person name="Kyrpides N."/>
            <person name="Kim E."/>
            <person name="Smith K.S."/>
            <person name="Ingram-Smith C."/>
            <person name="Richardson P."/>
        </authorList>
    </citation>
    <scope>NUCLEOTIDE SEQUENCE [LARGE SCALE GENOMIC DNA]</scope>
    <source>
        <strain>DSM 6194 / JCM 14653 / NBRC 101360 / PT</strain>
    </source>
</reference>
<comment type="catalytic activity">
    <reaction evidence="1">
        <text>tRNA(Leu) + L-leucine + ATP = L-leucyl-tRNA(Leu) + AMP + diphosphate</text>
        <dbReference type="Rhea" id="RHEA:11688"/>
        <dbReference type="Rhea" id="RHEA-COMP:9613"/>
        <dbReference type="Rhea" id="RHEA-COMP:9622"/>
        <dbReference type="ChEBI" id="CHEBI:30616"/>
        <dbReference type="ChEBI" id="CHEBI:33019"/>
        <dbReference type="ChEBI" id="CHEBI:57427"/>
        <dbReference type="ChEBI" id="CHEBI:78442"/>
        <dbReference type="ChEBI" id="CHEBI:78494"/>
        <dbReference type="ChEBI" id="CHEBI:456215"/>
        <dbReference type="EC" id="6.1.1.4"/>
    </reaction>
</comment>
<comment type="subcellular location">
    <subcellularLocation>
        <location evidence="1">Cytoplasm</location>
    </subcellularLocation>
</comment>
<comment type="similarity">
    <text evidence="1">Belongs to the class-I aminoacyl-tRNA synthetase family.</text>
</comment>
<protein>
    <recommendedName>
        <fullName evidence="1">Leucine--tRNA ligase</fullName>
        <ecNumber evidence="1">6.1.1.4</ecNumber>
    </recommendedName>
    <alternativeName>
        <fullName evidence="1">Leucyl-tRNA synthetase</fullName>
        <shortName evidence="1">LeuRS</shortName>
    </alternativeName>
</protein>
<proteinExistence type="inferred from homology"/>
<feature type="chain" id="PRO_0000334847" description="Leucine--tRNA ligase">
    <location>
        <begin position="1"/>
        <end position="950"/>
    </location>
</feature>
<feature type="region of interest" description="Disordered" evidence="2">
    <location>
        <begin position="928"/>
        <end position="950"/>
    </location>
</feature>
<feature type="short sequence motif" description="'HIGH' region">
    <location>
        <begin position="42"/>
        <end position="52"/>
    </location>
</feature>
<feature type="short sequence motif" description="'KMSKS' region">
    <location>
        <begin position="629"/>
        <end position="633"/>
    </location>
</feature>
<feature type="binding site" evidence="1">
    <location>
        <position position="632"/>
    </location>
    <ligand>
        <name>ATP</name>
        <dbReference type="ChEBI" id="CHEBI:30616"/>
    </ligand>
</feature>
<sequence>MLRNEYSAHEIEAKWQRIWEEEGVFHAEPDSRKKFFLTIPYPYLNGNLHAGHTRTFTIGDAIARYHRMLGENVLFPMAFHATGTPIVGLSELIANRDPLIWDVYTRLHGIPEEELEKLTTPEAIVDYFRKQAKLAMRSIGYSIDWRREFTTTDPAYNRFIEWQFGILREKGYVTKGSHPVRWCPNDQNPVEDHDILRGEDATILDFTLIKFRLDDKVLPCATLRPETVFGVTNLWVNPNVVHYIARVNDEVWIVSPQAYHKLTFTDRSVKKIGEIPGEELIGKKARNPVTGDEIIILPATFVDPDSGSGIVMSVPAHAPLDYLALRDLYDADLSKYGITEDLRKIKFISLISVPEYGEFPAVDAVNELGVKDQNDPKAEEATKLVYRREFHNGVLKEITGRYAGTPVHRIKDILLQDLINQGVAEIFYEFSETPVICRCGARCVVKMVRDQWFLEYSDPVWKSRVLECLAGMQIIPEEMRAEFINKIDWLKDKACARRKGLGTRLPWDREWLIESLADSTIYMAFYILAKYVNAGMKIDRLVPQFFDYIFLGKGTPEEVSSLTGVDVDTVRRIREDFEYWYPVDLRTSGKDLVANHLLFFLYHHVAIFPESLWPRAIAVNGFVSLEGQKMSKSRGPILTLKQAVAENGADVTRLYILANAEYTQDADWRNDGAQATRGQVERFYTLAREIIERNDIDESAELTLIDRWMLSRLQRRIIETTDALNNIQTRRALQSAFYHMLNDLRWYERRGGRNQLRRILNVWVRLMAPFTPHICEEIWQNIGEGYVSRAPWPVPDASLIDEQAERAEAYLEQTQKDIEEIIRVTKTKPRRIVLYTTPVWKREMLRLALEVSKGGRLDMGALMKSAMGHPEIQSHKKDAPKYGGKLAKSVHALSGDVLALDELGILSREREYLSQAFGCPVEVYSADNPPYDPKGRAQNAEPGRPAIYIE</sequence>
<name>SYL_METTP</name>
<gene>
    <name evidence="1" type="primary">leuS</name>
    <name type="ordered locus">Mthe_0802</name>
</gene>
<dbReference type="EC" id="6.1.1.4" evidence="1"/>
<dbReference type="EMBL" id="CP000477">
    <property type="protein sequence ID" value="ABK14591.1"/>
    <property type="molecule type" value="Genomic_DNA"/>
</dbReference>
<dbReference type="RefSeq" id="WP_011695987.1">
    <property type="nucleotide sequence ID" value="NC_008553.1"/>
</dbReference>
<dbReference type="SMR" id="A0B7B7"/>
<dbReference type="STRING" id="349307.Mthe_0802"/>
<dbReference type="GeneID" id="4461989"/>
<dbReference type="KEGG" id="mtp:Mthe_0802"/>
<dbReference type="HOGENOM" id="CLU_004174_0_0_2"/>
<dbReference type="OrthoDB" id="23906at2157"/>
<dbReference type="Proteomes" id="UP000000674">
    <property type="component" value="Chromosome"/>
</dbReference>
<dbReference type="GO" id="GO:0005737">
    <property type="term" value="C:cytoplasm"/>
    <property type="evidence" value="ECO:0007669"/>
    <property type="project" value="UniProtKB-SubCell"/>
</dbReference>
<dbReference type="GO" id="GO:0002161">
    <property type="term" value="F:aminoacyl-tRNA deacylase activity"/>
    <property type="evidence" value="ECO:0007669"/>
    <property type="project" value="InterPro"/>
</dbReference>
<dbReference type="GO" id="GO:0005524">
    <property type="term" value="F:ATP binding"/>
    <property type="evidence" value="ECO:0007669"/>
    <property type="project" value="UniProtKB-UniRule"/>
</dbReference>
<dbReference type="GO" id="GO:0004823">
    <property type="term" value="F:leucine-tRNA ligase activity"/>
    <property type="evidence" value="ECO:0007669"/>
    <property type="project" value="UniProtKB-UniRule"/>
</dbReference>
<dbReference type="GO" id="GO:0006429">
    <property type="term" value="P:leucyl-tRNA aminoacylation"/>
    <property type="evidence" value="ECO:0007669"/>
    <property type="project" value="UniProtKB-UniRule"/>
</dbReference>
<dbReference type="CDD" id="cd07959">
    <property type="entry name" value="Anticodon_Ia_Leu_AEc"/>
    <property type="match status" value="1"/>
</dbReference>
<dbReference type="FunFam" id="1.10.730.10:FF:000051">
    <property type="entry name" value="Leucine--tRNA ligase"/>
    <property type="match status" value="1"/>
</dbReference>
<dbReference type="FunFam" id="3.90.740.10:FF:000024">
    <property type="entry name" value="Leucine--tRNA ligase"/>
    <property type="match status" value="1"/>
</dbReference>
<dbReference type="Gene3D" id="3.30.2320.20">
    <property type="entry name" value="Class I aminoacyl-tRNA synthetases (RS)"/>
    <property type="match status" value="1"/>
</dbReference>
<dbReference type="Gene3D" id="3.40.50.620">
    <property type="entry name" value="HUPs"/>
    <property type="match status" value="1"/>
</dbReference>
<dbReference type="Gene3D" id="1.10.730.10">
    <property type="entry name" value="Isoleucyl-tRNA Synthetase, Domain 1"/>
    <property type="match status" value="1"/>
</dbReference>
<dbReference type="Gene3D" id="1.10.10.720">
    <property type="entry name" value="leucyl-tRNA synthetase"/>
    <property type="match status" value="1"/>
</dbReference>
<dbReference type="Gene3D" id="3.90.740.10">
    <property type="entry name" value="Valyl/Leucyl/Isoleucyl-tRNA synthetase, editing domain"/>
    <property type="match status" value="1"/>
</dbReference>
<dbReference type="HAMAP" id="MF_00049_A">
    <property type="entry name" value="Leu_tRNA_synth_A"/>
    <property type="match status" value="1"/>
</dbReference>
<dbReference type="InterPro" id="IPR001412">
    <property type="entry name" value="aa-tRNA-synth_I_CS"/>
</dbReference>
<dbReference type="InterPro" id="IPR002300">
    <property type="entry name" value="aa-tRNA-synth_Ia"/>
</dbReference>
<dbReference type="InterPro" id="IPR020791">
    <property type="entry name" value="Leu-tRNA-lgase_arc"/>
</dbReference>
<dbReference type="InterPro" id="IPR004493">
    <property type="entry name" value="Leu-tRNA-synth_Ia_arc/euk"/>
</dbReference>
<dbReference type="InterPro" id="IPR013155">
    <property type="entry name" value="M/V/L/I-tRNA-synth_anticd-bd"/>
</dbReference>
<dbReference type="InterPro" id="IPR015413">
    <property type="entry name" value="Methionyl/Leucyl_tRNA_Synth"/>
</dbReference>
<dbReference type="InterPro" id="IPR014729">
    <property type="entry name" value="Rossmann-like_a/b/a_fold"/>
</dbReference>
<dbReference type="InterPro" id="IPR009080">
    <property type="entry name" value="tRNAsynth_Ia_anticodon-bd"/>
</dbReference>
<dbReference type="InterPro" id="IPR009008">
    <property type="entry name" value="Val/Leu/Ile-tRNA-synth_edit"/>
</dbReference>
<dbReference type="NCBIfam" id="TIGR00395">
    <property type="entry name" value="leuS_arch"/>
    <property type="match status" value="1"/>
</dbReference>
<dbReference type="NCBIfam" id="NF008957">
    <property type="entry name" value="PRK12300.1"/>
    <property type="match status" value="1"/>
</dbReference>
<dbReference type="PANTHER" id="PTHR45794:SF1">
    <property type="entry name" value="LEUCINE--TRNA LIGASE, CYTOPLASMIC"/>
    <property type="match status" value="1"/>
</dbReference>
<dbReference type="PANTHER" id="PTHR45794">
    <property type="entry name" value="LEUCYL-TRNA SYNTHETASE"/>
    <property type="match status" value="1"/>
</dbReference>
<dbReference type="Pfam" id="PF08264">
    <property type="entry name" value="Anticodon_1"/>
    <property type="match status" value="1"/>
</dbReference>
<dbReference type="Pfam" id="PF00133">
    <property type="entry name" value="tRNA-synt_1"/>
    <property type="match status" value="1"/>
</dbReference>
<dbReference type="Pfam" id="PF09334">
    <property type="entry name" value="tRNA-synt_1g"/>
    <property type="match status" value="1"/>
</dbReference>
<dbReference type="SUPFAM" id="SSF47323">
    <property type="entry name" value="Anticodon-binding domain of a subclass of class I aminoacyl-tRNA synthetases"/>
    <property type="match status" value="1"/>
</dbReference>
<dbReference type="SUPFAM" id="SSF52374">
    <property type="entry name" value="Nucleotidylyl transferase"/>
    <property type="match status" value="1"/>
</dbReference>
<dbReference type="SUPFAM" id="SSF50677">
    <property type="entry name" value="ValRS/IleRS/LeuRS editing domain"/>
    <property type="match status" value="1"/>
</dbReference>
<dbReference type="PROSITE" id="PS00178">
    <property type="entry name" value="AA_TRNA_LIGASE_I"/>
    <property type="match status" value="1"/>
</dbReference>
<evidence type="ECO:0000255" key="1">
    <source>
        <dbReference type="HAMAP-Rule" id="MF_00049"/>
    </source>
</evidence>
<evidence type="ECO:0000256" key="2">
    <source>
        <dbReference type="SAM" id="MobiDB-lite"/>
    </source>
</evidence>
<accession>A0B7B7</accession>
<keyword id="KW-0030">Aminoacyl-tRNA synthetase</keyword>
<keyword id="KW-0067">ATP-binding</keyword>
<keyword id="KW-0963">Cytoplasm</keyword>
<keyword id="KW-0436">Ligase</keyword>
<keyword id="KW-0547">Nucleotide-binding</keyword>
<keyword id="KW-0648">Protein biosynthesis</keyword>
<keyword id="KW-1185">Reference proteome</keyword>
<organism>
    <name type="scientific">Methanothrix thermoacetophila (strain DSM 6194 / JCM 14653 / NBRC 101360 / PT)</name>
    <name type="common">Methanosaeta thermophila</name>
    <dbReference type="NCBI Taxonomy" id="349307"/>
    <lineage>
        <taxon>Archaea</taxon>
        <taxon>Methanobacteriati</taxon>
        <taxon>Methanobacteriota</taxon>
        <taxon>Stenosarchaea group</taxon>
        <taxon>Methanomicrobia</taxon>
        <taxon>Methanotrichales</taxon>
        <taxon>Methanotrichaceae</taxon>
        <taxon>Methanothrix</taxon>
    </lineage>
</organism>